<proteinExistence type="inferred from homology"/>
<name>RL18_BIFLS</name>
<keyword id="KW-0687">Ribonucleoprotein</keyword>
<keyword id="KW-0689">Ribosomal protein</keyword>
<keyword id="KW-0694">RNA-binding</keyword>
<keyword id="KW-0699">rRNA-binding</keyword>
<reference key="1">
    <citation type="journal article" date="2008" name="Proc. Natl. Acad. Sci. U.S.A.">
        <title>The genome sequence of Bifidobacterium longum subsp. infantis reveals adaptations for milk utilization within the infant microbiome.</title>
        <authorList>
            <person name="Sela D.A."/>
            <person name="Chapman J."/>
            <person name="Adeuya A."/>
            <person name="Kim J.H."/>
            <person name="Chen F."/>
            <person name="Whitehead T.R."/>
            <person name="Lapidus A."/>
            <person name="Rokhsar D.S."/>
            <person name="Lebrilla C.B."/>
            <person name="German J.B."/>
            <person name="Price N.P."/>
            <person name="Richardson P.M."/>
            <person name="Mills D.A."/>
        </authorList>
    </citation>
    <scope>NUCLEOTIDE SEQUENCE [LARGE SCALE GENOMIC DNA]</scope>
    <source>
        <strain>ATCC 15697 / DSM 20088 / JCM 1222 / NCTC 11817 / S12</strain>
    </source>
</reference>
<reference key="2">
    <citation type="journal article" date="2011" name="Nature">
        <title>Bifidobacteria can protect from enteropathogenic infection through production of acetate.</title>
        <authorList>
            <person name="Fukuda S."/>
            <person name="Toh H."/>
            <person name="Hase K."/>
            <person name="Oshima K."/>
            <person name="Nakanishi Y."/>
            <person name="Yoshimura K."/>
            <person name="Tobe T."/>
            <person name="Clarke J.M."/>
            <person name="Topping D.L."/>
            <person name="Suzuki T."/>
            <person name="Taylor T.D."/>
            <person name="Itoh K."/>
            <person name="Kikuchi J."/>
            <person name="Morita H."/>
            <person name="Hattori M."/>
            <person name="Ohno H."/>
        </authorList>
    </citation>
    <scope>NUCLEOTIDE SEQUENCE [LARGE SCALE GENOMIC DNA]</scope>
    <source>
        <strain>ATCC 15697 / DSM 20088 / JCM 1222 / NCTC 11817 / S12</strain>
    </source>
</reference>
<evidence type="ECO:0000255" key="1">
    <source>
        <dbReference type="HAMAP-Rule" id="MF_01337"/>
    </source>
</evidence>
<evidence type="ECO:0000305" key="2"/>
<dbReference type="EMBL" id="CP001095">
    <property type="protein sequence ID" value="ACJ53280.1"/>
    <property type="molecule type" value="Genomic_DNA"/>
</dbReference>
<dbReference type="EMBL" id="AP010889">
    <property type="protein sequence ID" value="BAJ69871.1"/>
    <property type="molecule type" value="Genomic_DNA"/>
</dbReference>
<dbReference type="RefSeq" id="WP_007053041.1">
    <property type="nucleotide sequence ID" value="NZ_JDTT01000039.1"/>
</dbReference>
<dbReference type="SMR" id="B7GNC4"/>
<dbReference type="GeneID" id="69578881"/>
<dbReference type="KEGG" id="bln:Blon_2221"/>
<dbReference type="KEGG" id="blon:BLIJ_2294"/>
<dbReference type="PATRIC" id="fig|391904.8.peg.2296"/>
<dbReference type="HOGENOM" id="CLU_098841_0_1_11"/>
<dbReference type="Proteomes" id="UP000001360">
    <property type="component" value="Chromosome"/>
</dbReference>
<dbReference type="GO" id="GO:0022625">
    <property type="term" value="C:cytosolic large ribosomal subunit"/>
    <property type="evidence" value="ECO:0007669"/>
    <property type="project" value="TreeGrafter"/>
</dbReference>
<dbReference type="GO" id="GO:0008097">
    <property type="term" value="F:5S rRNA binding"/>
    <property type="evidence" value="ECO:0007669"/>
    <property type="project" value="TreeGrafter"/>
</dbReference>
<dbReference type="GO" id="GO:0003735">
    <property type="term" value="F:structural constituent of ribosome"/>
    <property type="evidence" value="ECO:0007669"/>
    <property type="project" value="InterPro"/>
</dbReference>
<dbReference type="GO" id="GO:0006412">
    <property type="term" value="P:translation"/>
    <property type="evidence" value="ECO:0007669"/>
    <property type="project" value="UniProtKB-UniRule"/>
</dbReference>
<dbReference type="CDD" id="cd00432">
    <property type="entry name" value="Ribosomal_L18_L5e"/>
    <property type="match status" value="1"/>
</dbReference>
<dbReference type="FunFam" id="3.30.420.100:FF:000001">
    <property type="entry name" value="50S ribosomal protein L18"/>
    <property type="match status" value="1"/>
</dbReference>
<dbReference type="Gene3D" id="3.30.420.100">
    <property type="match status" value="1"/>
</dbReference>
<dbReference type="HAMAP" id="MF_01337_B">
    <property type="entry name" value="Ribosomal_uL18_B"/>
    <property type="match status" value="1"/>
</dbReference>
<dbReference type="InterPro" id="IPR004389">
    <property type="entry name" value="Ribosomal_uL18_bac-type"/>
</dbReference>
<dbReference type="InterPro" id="IPR005484">
    <property type="entry name" value="Ribosomal_uL18_bac/euk"/>
</dbReference>
<dbReference type="NCBIfam" id="TIGR00060">
    <property type="entry name" value="L18_bact"/>
    <property type="match status" value="1"/>
</dbReference>
<dbReference type="PANTHER" id="PTHR12899">
    <property type="entry name" value="39S RIBOSOMAL PROTEIN L18, MITOCHONDRIAL"/>
    <property type="match status" value="1"/>
</dbReference>
<dbReference type="PANTHER" id="PTHR12899:SF3">
    <property type="entry name" value="LARGE RIBOSOMAL SUBUNIT PROTEIN UL18M"/>
    <property type="match status" value="1"/>
</dbReference>
<dbReference type="Pfam" id="PF00861">
    <property type="entry name" value="Ribosomal_L18p"/>
    <property type="match status" value="1"/>
</dbReference>
<dbReference type="SUPFAM" id="SSF53137">
    <property type="entry name" value="Translational machinery components"/>
    <property type="match status" value="1"/>
</dbReference>
<sequence length="123" mass="12968">MSVAILGKGKKVALKRRHARIRKRISGTPERPRLVVTRSNRHMVAQVVDDTKGITLVSASTLQADFAGFEGTKTEAAKKVGELIAEKAKAAGITAVVFDRGGNKYTGRVAAVADGAREGGLAL</sequence>
<gene>
    <name evidence="1" type="primary">rplR</name>
    <name type="ordered locus">Blon_2221</name>
    <name type="ordered locus">BLIJ_2294</name>
</gene>
<feature type="chain" id="PRO_1000166208" description="Large ribosomal subunit protein uL18">
    <location>
        <begin position="1"/>
        <end position="123"/>
    </location>
</feature>
<protein>
    <recommendedName>
        <fullName evidence="1">Large ribosomal subunit protein uL18</fullName>
    </recommendedName>
    <alternativeName>
        <fullName evidence="2">50S ribosomal protein L18</fullName>
    </alternativeName>
</protein>
<accession>B7GNC4</accession>
<accession>E8MN68</accession>
<organism>
    <name type="scientific">Bifidobacterium longum subsp. infantis (strain ATCC 15697 / DSM 20088 / JCM 1222 / NCTC 11817 / S12)</name>
    <dbReference type="NCBI Taxonomy" id="391904"/>
    <lineage>
        <taxon>Bacteria</taxon>
        <taxon>Bacillati</taxon>
        <taxon>Actinomycetota</taxon>
        <taxon>Actinomycetes</taxon>
        <taxon>Bifidobacteriales</taxon>
        <taxon>Bifidobacteriaceae</taxon>
        <taxon>Bifidobacterium</taxon>
    </lineage>
</organism>
<comment type="function">
    <text evidence="1">This is one of the proteins that bind and probably mediate the attachment of the 5S RNA into the large ribosomal subunit, where it forms part of the central protuberance.</text>
</comment>
<comment type="subunit">
    <text evidence="1">Part of the 50S ribosomal subunit; part of the 5S rRNA/L5/L18/L25 subcomplex. Contacts the 5S and 23S rRNAs.</text>
</comment>
<comment type="similarity">
    <text evidence="1">Belongs to the universal ribosomal protein uL18 family.</text>
</comment>